<gene>
    <name type="ordered locus">c0938</name>
</gene>
<protein>
    <recommendedName>
        <fullName>Uncharacterized protein ORFC-like in prophage region</fullName>
    </recommendedName>
</protein>
<accession>P62535</accession>
<accession>P21317</accession>
<reference key="1">
    <citation type="journal article" date="2002" name="Proc. Natl. Acad. Sci. U.S.A.">
        <title>Extensive mosaic structure revealed by the complete genome sequence of uropathogenic Escherichia coli.</title>
        <authorList>
            <person name="Welch R.A."/>
            <person name="Burland V."/>
            <person name="Plunkett G. III"/>
            <person name="Redford P."/>
            <person name="Roesch P."/>
            <person name="Rasko D."/>
            <person name="Buckles E.L."/>
            <person name="Liou S.-R."/>
            <person name="Boutin A."/>
            <person name="Hackett J."/>
            <person name="Stroud D."/>
            <person name="Mayhew G.F."/>
            <person name="Rose D.J."/>
            <person name="Zhou S."/>
            <person name="Schwartz D.C."/>
            <person name="Perna N.T."/>
            <person name="Mobley H.L.T."/>
            <person name="Donnenberg M.S."/>
            <person name="Blattner F.R."/>
        </authorList>
    </citation>
    <scope>NUCLEOTIDE SEQUENCE [LARGE SCALE GENOMIC DNA]</scope>
    <source>
        <strain>CFT073 / ATCC 700928 / UPEC</strain>
    </source>
</reference>
<comment type="sequence caution" evidence="1">
    <conflict type="erroneous initiation">
        <sequence resource="EMBL-CDS" id="AAN79411"/>
    </conflict>
</comment>
<proteinExistence type="predicted"/>
<sequence>MAIEGAAATVPLSPGERLNGLNHIAELRAKVFGLNIESELERFIKDMRDPRDINNEQNKRALAAIFFMAKIPAERHSISINELTTDEKRELIKAMNHFRAVVSLFPRRLTMPN</sequence>
<keyword id="KW-1185">Reference proteome</keyword>
<name>YR7C_ECOL6</name>
<evidence type="ECO:0000305" key="1"/>
<feature type="chain" id="PRO_0000066455" description="Uncharacterized protein ORFC-like in prophage region">
    <location>
        <begin position="1"/>
        <end position="113"/>
    </location>
</feature>
<organism>
    <name type="scientific">Escherichia coli O6:H1 (strain CFT073 / ATCC 700928 / UPEC)</name>
    <dbReference type="NCBI Taxonomy" id="199310"/>
    <lineage>
        <taxon>Bacteria</taxon>
        <taxon>Pseudomonadati</taxon>
        <taxon>Pseudomonadota</taxon>
        <taxon>Gammaproteobacteria</taxon>
        <taxon>Enterobacterales</taxon>
        <taxon>Enterobacteriaceae</taxon>
        <taxon>Escherichia</taxon>
    </lineage>
</organism>
<dbReference type="EMBL" id="AE014075">
    <property type="protein sequence ID" value="AAN79411.1"/>
    <property type="status" value="ALT_INIT"/>
    <property type="molecule type" value="Genomic_DNA"/>
</dbReference>
<dbReference type="RefSeq" id="WP_000963473.1">
    <property type="nucleotide sequence ID" value="NZ_CP051263.1"/>
</dbReference>
<dbReference type="STRING" id="199310.c0938"/>
<dbReference type="KEGG" id="ecc:c0938"/>
<dbReference type="eggNOG" id="ENOG50336D7">
    <property type="taxonomic scope" value="Bacteria"/>
</dbReference>
<dbReference type="HOGENOM" id="CLU_2805628_0_0_6"/>
<dbReference type="Proteomes" id="UP000001410">
    <property type="component" value="Chromosome"/>
</dbReference>
<dbReference type="InterPro" id="IPR035232">
    <property type="entry name" value="DUF5347"/>
</dbReference>
<dbReference type="Pfam" id="PF17282">
    <property type="entry name" value="DUF5347"/>
    <property type="match status" value="1"/>
</dbReference>